<dbReference type="EMBL" id="CP000263">
    <property type="protein sequence ID" value="ABJ90490.1"/>
    <property type="molecule type" value="Genomic_DNA"/>
</dbReference>
<dbReference type="RefSeq" id="WP_011672409.1">
    <property type="nucleotide sequence ID" value="NC_008513.1"/>
</dbReference>
<dbReference type="SMR" id="Q058F9"/>
<dbReference type="STRING" id="372461.BCc_004"/>
<dbReference type="KEGG" id="bcc:BCc_004"/>
<dbReference type="eggNOG" id="COG0593">
    <property type="taxonomic scope" value="Bacteria"/>
</dbReference>
<dbReference type="HOGENOM" id="CLU_026910_0_1_6"/>
<dbReference type="OrthoDB" id="9807019at2"/>
<dbReference type="Proteomes" id="UP000000669">
    <property type="component" value="Chromosome"/>
</dbReference>
<dbReference type="GO" id="GO:0005737">
    <property type="term" value="C:cytoplasm"/>
    <property type="evidence" value="ECO:0007669"/>
    <property type="project" value="UniProtKB-SubCell"/>
</dbReference>
<dbReference type="GO" id="GO:0005886">
    <property type="term" value="C:plasma membrane"/>
    <property type="evidence" value="ECO:0007669"/>
    <property type="project" value="TreeGrafter"/>
</dbReference>
<dbReference type="GO" id="GO:0005524">
    <property type="term" value="F:ATP binding"/>
    <property type="evidence" value="ECO:0007669"/>
    <property type="project" value="UniProtKB-UniRule"/>
</dbReference>
<dbReference type="GO" id="GO:0016887">
    <property type="term" value="F:ATP hydrolysis activity"/>
    <property type="evidence" value="ECO:0007669"/>
    <property type="project" value="InterPro"/>
</dbReference>
<dbReference type="GO" id="GO:0003688">
    <property type="term" value="F:DNA replication origin binding"/>
    <property type="evidence" value="ECO:0007669"/>
    <property type="project" value="UniProtKB-UniRule"/>
</dbReference>
<dbReference type="GO" id="GO:0008289">
    <property type="term" value="F:lipid binding"/>
    <property type="evidence" value="ECO:0007669"/>
    <property type="project" value="UniProtKB-KW"/>
</dbReference>
<dbReference type="GO" id="GO:0006270">
    <property type="term" value="P:DNA replication initiation"/>
    <property type="evidence" value="ECO:0007669"/>
    <property type="project" value="UniProtKB-UniRule"/>
</dbReference>
<dbReference type="GO" id="GO:0006275">
    <property type="term" value="P:regulation of DNA replication"/>
    <property type="evidence" value="ECO:0007669"/>
    <property type="project" value="UniProtKB-UniRule"/>
</dbReference>
<dbReference type="CDD" id="cd00009">
    <property type="entry name" value="AAA"/>
    <property type="match status" value="1"/>
</dbReference>
<dbReference type="CDD" id="cd06571">
    <property type="entry name" value="Bac_DnaA_C"/>
    <property type="match status" value="1"/>
</dbReference>
<dbReference type="FunFam" id="3.40.50.300:FF:000668">
    <property type="entry name" value="Chromosomal replication initiator protein DnaA"/>
    <property type="match status" value="1"/>
</dbReference>
<dbReference type="Gene3D" id="1.10.1750.10">
    <property type="match status" value="1"/>
</dbReference>
<dbReference type="Gene3D" id="1.10.8.60">
    <property type="match status" value="1"/>
</dbReference>
<dbReference type="Gene3D" id="3.30.300.180">
    <property type="match status" value="1"/>
</dbReference>
<dbReference type="Gene3D" id="3.40.50.300">
    <property type="entry name" value="P-loop containing nucleotide triphosphate hydrolases"/>
    <property type="match status" value="1"/>
</dbReference>
<dbReference type="HAMAP" id="MF_00377">
    <property type="entry name" value="DnaA_bact"/>
    <property type="match status" value="1"/>
</dbReference>
<dbReference type="InterPro" id="IPR003593">
    <property type="entry name" value="AAA+_ATPase"/>
</dbReference>
<dbReference type="InterPro" id="IPR001957">
    <property type="entry name" value="Chromosome_initiator_DnaA"/>
</dbReference>
<dbReference type="InterPro" id="IPR020591">
    <property type="entry name" value="Chromosome_initiator_DnaA-like"/>
</dbReference>
<dbReference type="InterPro" id="IPR018312">
    <property type="entry name" value="Chromosome_initiator_DnaA_CS"/>
</dbReference>
<dbReference type="InterPro" id="IPR013159">
    <property type="entry name" value="DnaA_C"/>
</dbReference>
<dbReference type="InterPro" id="IPR013317">
    <property type="entry name" value="DnaA_dom"/>
</dbReference>
<dbReference type="InterPro" id="IPR024633">
    <property type="entry name" value="DnaA_N_dom"/>
</dbReference>
<dbReference type="InterPro" id="IPR038454">
    <property type="entry name" value="DnaA_N_sf"/>
</dbReference>
<dbReference type="InterPro" id="IPR055199">
    <property type="entry name" value="Hda_lid"/>
</dbReference>
<dbReference type="InterPro" id="IPR027417">
    <property type="entry name" value="P-loop_NTPase"/>
</dbReference>
<dbReference type="InterPro" id="IPR010921">
    <property type="entry name" value="Trp_repressor/repl_initiator"/>
</dbReference>
<dbReference type="NCBIfam" id="TIGR00362">
    <property type="entry name" value="DnaA"/>
    <property type="match status" value="1"/>
</dbReference>
<dbReference type="PANTHER" id="PTHR30050">
    <property type="entry name" value="CHROMOSOMAL REPLICATION INITIATOR PROTEIN DNAA"/>
    <property type="match status" value="1"/>
</dbReference>
<dbReference type="PANTHER" id="PTHR30050:SF2">
    <property type="entry name" value="CHROMOSOMAL REPLICATION INITIATOR PROTEIN DNAA"/>
    <property type="match status" value="1"/>
</dbReference>
<dbReference type="Pfam" id="PF00308">
    <property type="entry name" value="Bac_DnaA"/>
    <property type="match status" value="1"/>
</dbReference>
<dbReference type="Pfam" id="PF08299">
    <property type="entry name" value="Bac_DnaA_C"/>
    <property type="match status" value="1"/>
</dbReference>
<dbReference type="Pfam" id="PF11638">
    <property type="entry name" value="DnaA_N"/>
    <property type="match status" value="1"/>
</dbReference>
<dbReference type="Pfam" id="PF22688">
    <property type="entry name" value="Hda_lid"/>
    <property type="match status" value="1"/>
</dbReference>
<dbReference type="PRINTS" id="PR00051">
    <property type="entry name" value="DNAA"/>
</dbReference>
<dbReference type="SMART" id="SM00382">
    <property type="entry name" value="AAA"/>
    <property type="match status" value="1"/>
</dbReference>
<dbReference type="SMART" id="SM00760">
    <property type="entry name" value="Bac_DnaA_C"/>
    <property type="match status" value="1"/>
</dbReference>
<dbReference type="SUPFAM" id="SSF52540">
    <property type="entry name" value="P-loop containing nucleoside triphosphate hydrolases"/>
    <property type="match status" value="1"/>
</dbReference>
<dbReference type="SUPFAM" id="SSF48295">
    <property type="entry name" value="TrpR-like"/>
    <property type="match status" value="1"/>
</dbReference>
<dbReference type="PROSITE" id="PS01008">
    <property type="entry name" value="DNAA"/>
    <property type="match status" value="1"/>
</dbReference>
<evidence type="ECO:0000255" key="1">
    <source>
        <dbReference type="HAMAP-Rule" id="MF_00377"/>
    </source>
</evidence>
<comment type="function">
    <text evidence="1">Plays an essential role in the initiation and regulation of chromosomal replication. ATP-DnaA binds to the origin of replication (oriC) to initiate formation of the DNA replication initiation complex once per cell cycle. Binds the DnaA box (a 9 base pair repeat at the origin) and separates the double-stranded (ds)DNA. Forms a right-handed helical filament on oriC DNA; dsDNA binds to the exterior of the filament while single-stranded (ss)DNA is stabiized in the filament's interior. The ATP-DnaA-oriC complex binds and stabilizes one strand of the AT-rich DNA unwinding element (DUE), permitting loading of DNA polymerase. After initiation quickly degrades to an ADP-DnaA complex that is not apt for DNA replication. Binds acidic phospholipids.</text>
</comment>
<comment type="subunit">
    <text evidence="1">Oligomerizes as a right-handed, spiral filament on DNA at oriC.</text>
</comment>
<comment type="subcellular location">
    <subcellularLocation>
        <location evidence="1">Cytoplasm</location>
    </subcellularLocation>
</comment>
<comment type="domain">
    <text evidence="1">Domain I is involved in oligomerization and binding regulators, domain II is flexibile and of varying length in different bacteria, domain III forms the AAA+ region, while domain IV binds dsDNA.</text>
</comment>
<comment type="similarity">
    <text evidence="1">Belongs to the DnaA family.</text>
</comment>
<sequence length="437" mass="51983">MIFPIWKKCLIQLQIKLSPVEFSLWILPLKVTIKNNIIYIYTPNLFIFRWIKKKYVNIFKKILYKICSNNPPKIIINIEKKKLEKKKCIYKKKNIQIYLHSEINKKYQFHNFIQGQSNQLAYYSSYKFTKNLKNFYNPLFLYGNTGLGKTHLLHAIGNKFLIKNKKKKVIYIHSENFIQNMVNSLKNNSIDKFKNYYRSIDVLLLDDIQFFSNKKKSQEELFNTFNTLFNKQQKIVLTADCYPEYISGITEQLKSRFKWGLTISINPPELKTRIKILLHKAYENKILLSYEVAKYIAKKIFSNVRELEGILKKIQILSILNKEKITINLVKKILNKIKKKKKNINIIYIQKIVAKYFNIRISDMISQKRSQSIVHPRQIAMTLAKKLTHYSFSEIGTAFGKKDHTTVLYAYKKINQLKKKKTEIYSDFIYLFNQLNA</sequence>
<gene>
    <name evidence="1" type="primary">dnaA</name>
    <name type="ordered locus">BCc_004</name>
</gene>
<name>DNAA_BUCCC</name>
<accession>Q058F9</accession>
<protein>
    <recommendedName>
        <fullName evidence="1">Chromosomal replication initiator protein DnaA</fullName>
    </recommendedName>
</protein>
<keyword id="KW-0067">ATP-binding</keyword>
<keyword id="KW-0963">Cytoplasm</keyword>
<keyword id="KW-0235">DNA replication</keyword>
<keyword id="KW-0238">DNA-binding</keyword>
<keyword id="KW-0446">Lipid-binding</keyword>
<keyword id="KW-0547">Nucleotide-binding</keyword>
<keyword id="KW-1185">Reference proteome</keyword>
<organism>
    <name type="scientific">Buchnera aphidicola subsp. Cinara cedri (strain Cc)</name>
    <dbReference type="NCBI Taxonomy" id="372461"/>
    <lineage>
        <taxon>Bacteria</taxon>
        <taxon>Pseudomonadati</taxon>
        <taxon>Pseudomonadota</taxon>
        <taxon>Gammaproteobacteria</taxon>
        <taxon>Enterobacterales</taxon>
        <taxon>Erwiniaceae</taxon>
        <taxon>Buchnera</taxon>
    </lineage>
</organism>
<feature type="chain" id="PRO_1000048612" description="Chromosomal replication initiator protein DnaA">
    <location>
        <begin position="1"/>
        <end position="437"/>
    </location>
</feature>
<feature type="region of interest" description="Domain I, interacts with DnaA modulators" evidence="1">
    <location>
        <begin position="1"/>
        <end position="82"/>
    </location>
</feature>
<feature type="region of interest" description="Domain II" evidence="1">
    <location>
        <begin position="82"/>
        <end position="101"/>
    </location>
</feature>
<feature type="region of interest" description="Domain III, AAA+ region" evidence="1">
    <location>
        <begin position="102"/>
        <end position="318"/>
    </location>
</feature>
<feature type="region of interest" description="Domain IV, binds dsDNA" evidence="1">
    <location>
        <begin position="319"/>
        <end position="437"/>
    </location>
</feature>
<feature type="binding site" evidence="1">
    <location>
        <position position="146"/>
    </location>
    <ligand>
        <name>ATP</name>
        <dbReference type="ChEBI" id="CHEBI:30616"/>
    </ligand>
</feature>
<feature type="binding site" evidence="1">
    <location>
        <position position="148"/>
    </location>
    <ligand>
        <name>ATP</name>
        <dbReference type="ChEBI" id="CHEBI:30616"/>
    </ligand>
</feature>
<feature type="binding site" evidence="1">
    <location>
        <position position="149"/>
    </location>
    <ligand>
        <name>ATP</name>
        <dbReference type="ChEBI" id="CHEBI:30616"/>
    </ligand>
</feature>
<feature type="binding site" evidence="1">
    <location>
        <position position="150"/>
    </location>
    <ligand>
        <name>ATP</name>
        <dbReference type="ChEBI" id="CHEBI:30616"/>
    </ligand>
</feature>
<proteinExistence type="inferred from homology"/>
<reference key="1">
    <citation type="journal article" date="2006" name="Science">
        <title>A small microbial genome: the end of a long symbiotic relationship?</title>
        <authorList>
            <person name="Perez-Brocal V."/>
            <person name="Gil R."/>
            <person name="Ramos S."/>
            <person name="Lamelas A."/>
            <person name="Postigo M."/>
            <person name="Michelena J.M."/>
            <person name="Silva F.J."/>
            <person name="Moya A."/>
            <person name="Latorre A."/>
        </authorList>
    </citation>
    <scope>NUCLEOTIDE SEQUENCE [LARGE SCALE GENOMIC DNA]</scope>
    <source>
        <strain>Cc</strain>
    </source>
</reference>